<accession>Q12IT9</accession>
<sequence length="174" mass="18919">MTTIVSVRRNNQVVIAGDGQVSLGNTVMKGNARKVRRLYHNKVLAGFAGGTADAFTLFERFEAKLEMHQGHLLKSAVELAKDWRTDKMLRKLEAMLVVADTEASLIITGNGDVVQPEHDLIAIGSGGNYAQAAALALLQNTELSAQEIADKSLTIAGDICVFTNQFKTIEQLDY</sequence>
<dbReference type="EC" id="3.4.25.2" evidence="1"/>
<dbReference type="EMBL" id="CP000302">
    <property type="protein sequence ID" value="ABE56637.1"/>
    <property type="molecule type" value="Genomic_DNA"/>
</dbReference>
<dbReference type="RefSeq" id="WP_011497779.1">
    <property type="nucleotide sequence ID" value="NC_007954.1"/>
</dbReference>
<dbReference type="SMR" id="Q12IT9"/>
<dbReference type="STRING" id="318161.Sden_3361"/>
<dbReference type="MEROPS" id="T01.007"/>
<dbReference type="KEGG" id="sdn:Sden_3361"/>
<dbReference type="eggNOG" id="COG5405">
    <property type="taxonomic scope" value="Bacteria"/>
</dbReference>
<dbReference type="HOGENOM" id="CLU_093872_1_0_6"/>
<dbReference type="OrthoDB" id="9804884at2"/>
<dbReference type="Proteomes" id="UP000001982">
    <property type="component" value="Chromosome"/>
</dbReference>
<dbReference type="GO" id="GO:0009376">
    <property type="term" value="C:HslUV protease complex"/>
    <property type="evidence" value="ECO:0007669"/>
    <property type="project" value="UniProtKB-UniRule"/>
</dbReference>
<dbReference type="GO" id="GO:0005839">
    <property type="term" value="C:proteasome core complex"/>
    <property type="evidence" value="ECO:0007669"/>
    <property type="project" value="InterPro"/>
</dbReference>
<dbReference type="GO" id="GO:0046872">
    <property type="term" value="F:metal ion binding"/>
    <property type="evidence" value="ECO:0007669"/>
    <property type="project" value="UniProtKB-KW"/>
</dbReference>
<dbReference type="GO" id="GO:0004298">
    <property type="term" value="F:threonine-type endopeptidase activity"/>
    <property type="evidence" value="ECO:0007669"/>
    <property type="project" value="UniProtKB-KW"/>
</dbReference>
<dbReference type="GO" id="GO:0051603">
    <property type="term" value="P:proteolysis involved in protein catabolic process"/>
    <property type="evidence" value="ECO:0007669"/>
    <property type="project" value="InterPro"/>
</dbReference>
<dbReference type="CDD" id="cd01913">
    <property type="entry name" value="protease_HslV"/>
    <property type="match status" value="1"/>
</dbReference>
<dbReference type="FunFam" id="3.60.20.10:FF:000002">
    <property type="entry name" value="ATP-dependent protease subunit HslV"/>
    <property type="match status" value="1"/>
</dbReference>
<dbReference type="Gene3D" id="3.60.20.10">
    <property type="entry name" value="Glutamine Phosphoribosylpyrophosphate, subunit 1, domain 1"/>
    <property type="match status" value="1"/>
</dbReference>
<dbReference type="HAMAP" id="MF_00248">
    <property type="entry name" value="HslV"/>
    <property type="match status" value="1"/>
</dbReference>
<dbReference type="InterPro" id="IPR022281">
    <property type="entry name" value="ATP-dep_Prtase_HsIV_su"/>
</dbReference>
<dbReference type="InterPro" id="IPR029055">
    <property type="entry name" value="Ntn_hydrolases_N"/>
</dbReference>
<dbReference type="InterPro" id="IPR001353">
    <property type="entry name" value="Proteasome_sua/b"/>
</dbReference>
<dbReference type="InterPro" id="IPR023333">
    <property type="entry name" value="Proteasome_suB-type"/>
</dbReference>
<dbReference type="NCBIfam" id="TIGR03692">
    <property type="entry name" value="ATP_dep_HslV"/>
    <property type="match status" value="1"/>
</dbReference>
<dbReference type="NCBIfam" id="NF003964">
    <property type="entry name" value="PRK05456.1"/>
    <property type="match status" value="1"/>
</dbReference>
<dbReference type="PANTHER" id="PTHR32194:SF0">
    <property type="entry name" value="ATP-DEPENDENT PROTEASE SUBUNIT HSLV"/>
    <property type="match status" value="1"/>
</dbReference>
<dbReference type="PANTHER" id="PTHR32194">
    <property type="entry name" value="METALLOPROTEASE TLDD"/>
    <property type="match status" value="1"/>
</dbReference>
<dbReference type="Pfam" id="PF00227">
    <property type="entry name" value="Proteasome"/>
    <property type="match status" value="1"/>
</dbReference>
<dbReference type="PIRSF" id="PIRSF039093">
    <property type="entry name" value="HslV"/>
    <property type="match status" value="1"/>
</dbReference>
<dbReference type="SUPFAM" id="SSF56235">
    <property type="entry name" value="N-terminal nucleophile aminohydrolases (Ntn hydrolases)"/>
    <property type="match status" value="1"/>
</dbReference>
<dbReference type="PROSITE" id="PS51476">
    <property type="entry name" value="PROTEASOME_BETA_2"/>
    <property type="match status" value="1"/>
</dbReference>
<proteinExistence type="inferred from homology"/>
<protein>
    <recommendedName>
        <fullName evidence="1">ATP-dependent protease subunit HslV</fullName>
        <ecNumber evidence="1">3.4.25.2</ecNumber>
    </recommendedName>
</protein>
<evidence type="ECO:0000255" key="1">
    <source>
        <dbReference type="HAMAP-Rule" id="MF_00248"/>
    </source>
</evidence>
<organism>
    <name type="scientific">Shewanella denitrificans (strain OS217 / ATCC BAA-1090 / DSM 15013)</name>
    <dbReference type="NCBI Taxonomy" id="318161"/>
    <lineage>
        <taxon>Bacteria</taxon>
        <taxon>Pseudomonadati</taxon>
        <taxon>Pseudomonadota</taxon>
        <taxon>Gammaproteobacteria</taxon>
        <taxon>Alteromonadales</taxon>
        <taxon>Shewanellaceae</taxon>
        <taxon>Shewanella</taxon>
    </lineage>
</organism>
<name>HSLV_SHEDO</name>
<reference key="1">
    <citation type="submission" date="2006-03" db="EMBL/GenBank/DDBJ databases">
        <title>Complete sequence of Shewanella denitrificans OS217.</title>
        <authorList>
            <consortium name="US DOE Joint Genome Institute"/>
            <person name="Copeland A."/>
            <person name="Lucas S."/>
            <person name="Lapidus A."/>
            <person name="Barry K."/>
            <person name="Detter J.C."/>
            <person name="Glavina del Rio T."/>
            <person name="Hammon N."/>
            <person name="Israni S."/>
            <person name="Dalin E."/>
            <person name="Tice H."/>
            <person name="Pitluck S."/>
            <person name="Brettin T."/>
            <person name="Bruce D."/>
            <person name="Han C."/>
            <person name="Tapia R."/>
            <person name="Gilna P."/>
            <person name="Kiss H."/>
            <person name="Schmutz J."/>
            <person name="Larimer F."/>
            <person name="Land M."/>
            <person name="Hauser L."/>
            <person name="Kyrpides N."/>
            <person name="Lykidis A."/>
            <person name="Richardson P."/>
        </authorList>
    </citation>
    <scope>NUCLEOTIDE SEQUENCE [LARGE SCALE GENOMIC DNA]</scope>
    <source>
        <strain>OS217 / ATCC BAA-1090 / DSM 15013</strain>
    </source>
</reference>
<gene>
    <name evidence="1" type="primary">hslV</name>
    <name type="ordered locus">Sden_3361</name>
</gene>
<comment type="function">
    <text evidence="1">Protease subunit of a proteasome-like degradation complex believed to be a general protein degrading machinery.</text>
</comment>
<comment type="catalytic activity">
    <reaction evidence="1">
        <text>ATP-dependent cleavage of peptide bonds with broad specificity.</text>
        <dbReference type="EC" id="3.4.25.2"/>
    </reaction>
</comment>
<comment type="activity regulation">
    <text evidence="1">Allosterically activated by HslU binding.</text>
</comment>
<comment type="subunit">
    <text evidence="1">A double ring-shaped homohexamer of HslV is capped on each side by a ring-shaped HslU homohexamer. The assembly of the HslU/HslV complex is dependent on binding of ATP.</text>
</comment>
<comment type="subcellular location">
    <subcellularLocation>
        <location evidence="1">Cytoplasm</location>
    </subcellularLocation>
</comment>
<comment type="similarity">
    <text evidence="1">Belongs to the peptidase T1B family. HslV subfamily.</text>
</comment>
<feature type="chain" id="PRO_1000012667" description="ATP-dependent protease subunit HslV">
    <location>
        <begin position="1"/>
        <end position="174"/>
    </location>
</feature>
<feature type="active site" evidence="1">
    <location>
        <position position="2"/>
    </location>
</feature>
<feature type="binding site" evidence="1">
    <location>
        <position position="157"/>
    </location>
    <ligand>
        <name>Na(+)</name>
        <dbReference type="ChEBI" id="CHEBI:29101"/>
    </ligand>
</feature>
<feature type="binding site" evidence="1">
    <location>
        <position position="160"/>
    </location>
    <ligand>
        <name>Na(+)</name>
        <dbReference type="ChEBI" id="CHEBI:29101"/>
    </ligand>
</feature>
<feature type="binding site" evidence="1">
    <location>
        <position position="163"/>
    </location>
    <ligand>
        <name>Na(+)</name>
        <dbReference type="ChEBI" id="CHEBI:29101"/>
    </ligand>
</feature>
<keyword id="KW-0021">Allosteric enzyme</keyword>
<keyword id="KW-0963">Cytoplasm</keyword>
<keyword id="KW-0378">Hydrolase</keyword>
<keyword id="KW-0479">Metal-binding</keyword>
<keyword id="KW-0645">Protease</keyword>
<keyword id="KW-1185">Reference proteome</keyword>
<keyword id="KW-0915">Sodium</keyword>
<keyword id="KW-0888">Threonine protease</keyword>